<reference key="1">
    <citation type="journal article" date="2004" name="Nature">
        <title>Sequence and comparative analysis of the chicken genome provide unique perspectives on vertebrate evolution.</title>
        <authorList>
            <person name="Hillier L.W."/>
            <person name="Miller W."/>
            <person name="Birney E."/>
            <person name="Warren W."/>
            <person name="Hardison R.C."/>
            <person name="Ponting C.P."/>
            <person name="Bork P."/>
            <person name="Burt D.W."/>
            <person name="Groenen M.A.M."/>
            <person name="Delany M.E."/>
            <person name="Dodgson J.B."/>
            <person name="Chinwalla A.T."/>
            <person name="Cliften P.F."/>
            <person name="Clifton S.W."/>
            <person name="Delehaunty K.D."/>
            <person name="Fronick C."/>
            <person name="Fulton R.S."/>
            <person name="Graves T.A."/>
            <person name="Kremitzki C."/>
            <person name="Layman D."/>
            <person name="Magrini V."/>
            <person name="McPherson J.D."/>
            <person name="Miner T.L."/>
            <person name="Minx P."/>
            <person name="Nash W.E."/>
            <person name="Nhan M.N."/>
            <person name="Nelson J.O."/>
            <person name="Oddy L.G."/>
            <person name="Pohl C.S."/>
            <person name="Randall-Maher J."/>
            <person name="Smith S.M."/>
            <person name="Wallis J.W."/>
            <person name="Yang S.-P."/>
            <person name="Romanov M.N."/>
            <person name="Rondelli C.M."/>
            <person name="Paton B."/>
            <person name="Smith J."/>
            <person name="Morrice D."/>
            <person name="Daniels L."/>
            <person name="Tempest H.G."/>
            <person name="Robertson L."/>
            <person name="Masabanda J.S."/>
            <person name="Griffin D.K."/>
            <person name="Vignal A."/>
            <person name="Fillon V."/>
            <person name="Jacobbson L."/>
            <person name="Kerje S."/>
            <person name="Andersson L."/>
            <person name="Crooijmans R.P."/>
            <person name="Aerts J."/>
            <person name="van der Poel J.J."/>
            <person name="Ellegren H."/>
            <person name="Caldwell R.B."/>
            <person name="Hubbard S.J."/>
            <person name="Grafham D.V."/>
            <person name="Kierzek A.M."/>
            <person name="McLaren S.R."/>
            <person name="Overton I.M."/>
            <person name="Arakawa H."/>
            <person name="Beattie K.J."/>
            <person name="Bezzubov Y."/>
            <person name="Boardman P.E."/>
            <person name="Bonfield J.K."/>
            <person name="Croning M.D.R."/>
            <person name="Davies R.M."/>
            <person name="Francis M.D."/>
            <person name="Humphray S.J."/>
            <person name="Scott C.E."/>
            <person name="Taylor R.G."/>
            <person name="Tickle C."/>
            <person name="Brown W.R.A."/>
            <person name="Rogers J."/>
            <person name="Buerstedde J.-M."/>
            <person name="Wilson S.A."/>
            <person name="Stubbs L."/>
            <person name="Ovcharenko I."/>
            <person name="Gordon L."/>
            <person name="Lucas S."/>
            <person name="Miller M.M."/>
            <person name="Inoko H."/>
            <person name="Shiina T."/>
            <person name="Kaufman J."/>
            <person name="Salomonsen J."/>
            <person name="Skjoedt K."/>
            <person name="Wong G.K.-S."/>
            <person name="Wang J."/>
            <person name="Liu B."/>
            <person name="Wang J."/>
            <person name="Yu J."/>
            <person name="Yang H."/>
            <person name="Nefedov M."/>
            <person name="Koriabine M."/>
            <person name="Dejong P.J."/>
            <person name="Goodstadt L."/>
            <person name="Webber C."/>
            <person name="Dickens N.J."/>
            <person name="Letunic I."/>
            <person name="Suyama M."/>
            <person name="Torrents D."/>
            <person name="von Mering C."/>
            <person name="Zdobnov E.M."/>
            <person name="Makova K."/>
            <person name="Nekrutenko A."/>
            <person name="Elnitski L."/>
            <person name="Eswara P."/>
            <person name="King D.C."/>
            <person name="Yang S.-P."/>
            <person name="Tyekucheva S."/>
            <person name="Radakrishnan A."/>
            <person name="Harris R.S."/>
            <person name="Chiaromonte F."/>
            <person name="Taylor J."/>
            <person name="He J."/>
            <person name="Rijnkels M."/>
            <person name="Griffiths-Jones S."/>
            <person name="Ureta-Vidal A."/>
            <person name="Hoffman M.M."/>
            <person name="Severin J."/>
            <person name="Searle S.M.J."/>
            <person name="Law A.S."/>
            <person name="Speed D."/>
            <person name="Waddington D."/>
            <person name="Cheng Z."/>
            <person name="Tuzun E."/>
            <person name="Eichler E."/>
            <person name="Bao Z."/>
            <person name="Flicek P."/>
            <person name="Shteynberg D.D."/>
            <person name="Brent M.R."/>
            <person name="Bye J.M."/>
            <person name="Huckle E.J."/>
            <person name="Chatterji S."/>
            <person name="Dewey C."/>
            <person name="Pachter L."/>
            <person name="Kouranov A."/>
            <person name="Mourelatos Z."/>
            <person name="Hatzigeorgiou A.G."/>
            <person name="Paterson A.H."/>
            <person name="Ivarie R."/>
            <person name="Brandstrom M."/>
            <person name="Axelsson E."/>
            <person name="Backstrom N."/>
            <person name="Berlin S."/>
            <person name="Webster M.T."/>
            <person name="Pourquie O."/>
            <person name="Reymond A."/>
            <person name="Ucla C."/>
            <person name="Antonarakis S.E."/>
            <person name="Long M."/>
            <person name="Emerson J.J."/>
            <person name="Betran E."/>
            <person name="Dupanloup I."/>
            <person name="Kaessmann H."/>
            <person name="Hinrichs A.S."/>
            <person name="Bejerano G."/>
            <person name="Furey T.S."/>
            <person name="Harte R.A."/>
            <person name="Raney B."/>
            <person name="Siepel A."/>
            <person name="Kent W.J."/>
            <person name="Haussler D."/>
            <person name="Eyras E."/>
            <person name="Castelo R."/>
            <person name="Abril J.F."/>
            <person name="Castellano S."/>
            <person name="Camara F."/>
            <person name="Parra G."/>
            <person name="Guigo R."/>
            <person name="Bourque G."/>
            <person name="Tesler G."/>
            <person name="Pevzner P.A."/>
            <person name="Smit A."/>
            <person name="Fulton L.A."/>
            <person name="Mardis E.R."/>
            <person name="Wilson R.K."/>
        </authorList>
    </citation>
    <scope>NUCLEOTIDE SEQUENCE [GENOMIC DNA]</scope>
</reference>
<reference key="2">
    <citation type="journal article" date="1998" name="J. Biol. Chem.">
        <title>Characterization and molecular evolution of a vertebrate hyaluronan synthase gene family.</title>
        <authorList>
            <person name="Spicer A.P."/>
            <person name="McDonald J.A."/>
        </authorList>
    </citation>
    <scope>NUCLEOTIDE SEQUENCE [GENOMIC DNA] OF 296-485</scope>
    <source>
        <strain>White leghorn</strain>
    </source>
</reference>
<feature type="chain" id="PRO_0000197180" description="Hyaluronan synthase 3">
    <location>
        <begin position="1"/>
        <end position="574"/>
    </location>
</feature>
<feature type="topological domain" description="Cytoplasmic" evidence="4">
    <location>
        <begin position="1"/>
        <end position="15"/>
    </location>
</feature>
<feature type="transmembrane region" description="Helical; Name=1" evidence="3">
    <location>
        <begin position="16"/>
        <end position="36"/>
    </location>
</feature>
<feature type="topological domain" description="Extracellular" evidence="4">
    <location>
        <begin position="37"/>
        <end position="44"/>
    </location>
</feature>
<feature type="transmembrane region" description="Helical; Name=2" evidence="3">
    <location>
        <begin position="45"/>
        <end position="65"/>
    </location>
</feature>
<feature type="topological domain" description="Cytoplasmic" evidence="4">
    <location>
        <begin position="66"/>
        <end position="398"/>
    </location>
</feature>
<feature type="transmembrane region" description="Helical; Name=3" evidence="3">
    <location>
        <begin position="399"/>
        <end position="419"/>
    </location>
</feature>
<feature type="topological domain" description="Extracellular" evidence="4">
    <location>
        <begin position="420"/>
        <end position="429"/>
    </location>
</feature>
<feature type="transmembrane region" description="Helical; Name=4" evidence="3">
    <location>
        <begin position="430"/>
        <end position="450"/>
    </location>
</feature>
<feature type="topological domain" description="Cytoplasmic" evidence="4">
    <location>
        <begin position="451"/>
        <end position="456"/>
    </location>
</feature>
<feature type="transmembrane region" description="Helical; Name=5" evidence="3">
    <location>
        <begin position="457"/>
        <end position="477"/>
    </location>
</feature>
<feature type="topological domain" description="Extracellular" evidence="4">
    <location>
        <begin position="478"/>
        <end position="494"/>
    </location>
</feature>
<feature type="transmembrane region" description="Helical; Name=6" evidence="3">
    <location>
        <begin position="495"/>
        <end position="515"/>
    </location>
</feature>
<feature type="topological domain" description="Cytoplasmic" evidence="4">
    <location>
        <begin position="516"/>
        <end position="530"/>
    </location>
</feature>
<feature type="transmembrane region" description="Helical; Name=7" evidence="3">
    <location>
        <begin position="531"/>
        <end position="551"/>
    </location>
</feature>
<feature type="topological domain" description="Extracellular" evidence="4">
    <location>
        <begin position="552"/>
        <end position="574"/>
    </location>
</feature>
<feature type="sequence conflict" description="In Ref. 2; AAB94538." evidence="4" ref="2">
    <original>A</original>
    <variation>T</variation>
    <location>
        <position position="314"/>
    </location>
</feature>
<feature type="sequence conflict" description="In Ref. 2; AAB94538." evidence="4" ref="2">
    <original>A</original>
    <variation>P</variation>
    <location>
        <position position="356"/>
    </location>
</feature>
<evidence type="ECO:0000250" key="1">
    <source>
        <dbReference type="UniProtKB" id="O00219"/>
    </source>
</evidence>
<evidence type="ECO:0000250" key="2">
    <source>
        <dbReference type="UniProtKB" id="O08650"/>
    </source>
</evidence>
<evidence type="ECO:0000255" key="3"/>
<evidence type="ECO:0000305" key="4"/>
<proteinExistence type="inferred from homology"/>
<keyword id="KW-1003">Cell membrane</keyword>
<keyword id="KW-0968">Cytoplasmic vesicle</keyword>
<keyword id="KW-0328">Glycosyltransferase</keyword>
<keyword id="KW-0333">Golgi apparatus</keyword>
<keyword id="KW-0472">Membrane</keyword>
<keyword id="KW-1185">Reference proteome</keyword>
<keyword id="KW-0808">Transferase</keyword>
<keyword id="KW-0812">Transmembrane</keyword>
<keyword id="KW-1133">Transmembrane helix</keyword>
<sequence>MPVSLSTALRVVGTSLFALAVLGGILAAYVTGYQFIHTEKHYLSFGLYGAILGLHLFIQSLFAFLEHRRMRAERQPVRLGRSVALCIAAYQEDPDYLKKCLLSVKRIAFPDLKVVMVVDGNGPDDTYMLDIFHDVMGSERAGSYVWRSNFHARGEGETEAGLQEGLAHVQALVRSTTYSCILQKWGGKREVMYTAFRALGDSVDYIQVCDSDTVLDPACTAEMLRILEADPRVGGVGGDVQVWRRGGDGTHGGTALALVALTPSPPQILNKYDSWISFLSSVRYWMAFNVERACQSYFGCVQCISGPLGMYRNALLQQFLEDWYHQTFLGTKCSFGDDRHLTNRVLSLGYQTKYTARSRCLTETPTRYLRWLNQQTRWSKSYFREWLYNALWFHKHHLWMTYESVVTGFFPFFLIATVIQLFYRGRIWNILLFLLTVQLVGIIKATYACFLRGSAEMIFVSLYALLYMSSLLPAKMFAIATINKSGWGTSGRRTIVVNFVGLLPVSVWAAVLLGGLAYTAYSQDLLSDTEVAFLISGAVLYACYWVALLTLYLAMVARRCGKRKEQCGLVFAEV</sequence>
<organism>
    <name type="scientific">Gallus gallus</name>
    <name type="common">Chicken</name>
    <dbReference type="NCBI Taxonomy" id="9031"/>
    <lineage>
        <taxon>Eukaryota</taxon>
        <taxon>Metazoa</taxon>
        <taxon>Chordata</taxon>
        <taxon>Craniata</taxon>
        <taxon>Vertebrata</taxon>
        <taxon>Euteleostomi</taxon>
        <taxon>Archelosauria</taxon>
        <taxon>Archosauria</taxon>
        <taxon>Dinosauria</taxon>
        <taxon>Saurischia</taxon>
        <taxon>Theropoda</taxon>
        <taxon>Coelurosauria</taxon>
        <taxon>Aves</taxon>
        <taxon>Neognathae</taxon>
        <taxon>Galloanserae</taxon>
        <taxon>Galliformes</taxon>
        <taxon>Phasianidae</taxon>
        <taxon>Phasianinae</taxon>
        <taxon>Gallus</taxon>
    </lineage>
</organism>
<protein>
    <recommendedName>
        <fullName>Hyaluronan synthase 3</fullName>
        <ecNumber evidence="2">2.4.1.212</ecNumber>
    </recommendedName>
    <alternativeName>
        <fullName>Hyaluronate synthase 3</fullName>
    </alternativeName>
    <alternativeName>
        <fullName>Hyaluronic acid synthase 3</fullName>
        <shortName>CHAS3</shortName>
        <shortName>HA synthase 3</shortName>
    </alternativeName>
</protein>
<name>HYAS3_CHICK</name>
<dbReference type="EC" id="2.4.1.212" evidence="2"/>
<dbReference type="EMBL" id="AADN05000558">
    <property type="status" value="NOT_ANNOTATED_CDS"/>
    <property type="molecule type" value="Genomic_DNA"/>
</dbReference>
<dbReference type="EMBL" id="AF015777">
    <property type="protein sequence ID" value="AAB94538.1"/>
    <property type="molecule type" value="Genomic_DNA"/>
</dbReference>
<dbReference type="SMR" id="O57425"/>
<dbReference type="FunCoup" id="O57425">
    <property type="interactions" value="2"/>
</dbReference>
<dbReference type="STRING" id="9031.ENSGALP00000071073"/>
<dbReference type="CAZy" id="GT2">
    <property type="family name" value="Glycosyltransferase Family 2"/>
</dbReference>
<dbReference type="PaxDb" id="9031-ENSGALP00000000894"/>
<dbReference type="VEuPathDB" id="HostDB:geneid_427564"/>
<dbReference type="eggNOG" id="KOG2571">
    <property type="taxonomic scope" value="Eukaryota"/>
</dbReference>
<dbReference type="HOGENOM" id="CLU_029695_3_0_1"/>
<dbReference type="InParanoid" id="O57425"/>
<dbReference type="OrthoDB" id="9876900at2759"/>
<dbReference type="PhylomeDB" id="O57425"/>
<dbReference type="TreeFam" id="TF332506"/>
<dbReference type="Reactome" id="R-GGA-2142850">
    <property type="pathway name" value="Hyaluronan biosynthesis and export"/>
</dbReference>
<dbReference type="UniPathway" id="UPA00341"/>
<dbReference type="PRO" id="PR:O57425"/>
<dbReference type="Proteomes" id="UP000000539">
    <property type="component" value="Chromosome 11"/>
</dbReference>
<dbReference type="Bgee" id="ENSGALG00000000630">
    <property type="expression patterns" value="Expressed in granulocyte and 1 other cell type or tissue"/>
</dbReference>
<dbReference type="GO" id="GO:0031410">
    <property type="term" value="C:cytoplasmic vesicle"/>
    <property type="evidence" value="ECO:0007669"/>
    <property type="project" value="UniProtKB-KW"/>
</dbReference>
<dbReference type="GO" id="GO:0000139">
    <property type="term" value="C:Golgi membrane"/>
    <property type="evidence" value="ECO:0007669"/>
    <property type="project" value="UniProtKB-SubCell"/>
</dbReference>
<dbReference type="GO" id="GO:0005886">
    <property type="term" value="C:plasma membrane"/>
    <property type="evidence" value="ECO:0000318"/>
    <property type="project" value="GO_Central"/>
</dbReference>
<dbReference type="GO" id="GO:0050501">
    <property type="term" value="F:hyaluronan synthase activity"/>
    <property type="evidence" value="ECO:0000250"/>
    <property type="project" value="UniProtKB"/>
</dbReference>
<dbReference type="GO" id="GO:0085029">
    <property type="term" value="P:extracellular matrix assembly"/>
    <property type="evidence" value="ECO:0000250"/>
    <property type="project" value="UniProtKB"/>
</dbReference>
<dbReference type="GO" id="GO:0030213">
    <property type="term" value="P:hyaluronan biosynthetic process"/>
    <property type="evidence" value="ECO:0000318"/>
    <property type="project" value="GO_Central"/>
</dbReference>
<dbReference type="GO" id="GO:0000271">
    <property type="term" value="P:polysaccharide biosynthetic process"/>
    <property type="evidence" value="ECO:0000250"/>
    <property type="project" value="UniProtKB"/>
</dbReference>
<dbReference type="Gene3D" id="3.90.550.10">
    <property type="entry name" value="Spore Coat Polysaccharide Biosynthesis Protein SpsA, Chain A"/>
    <property type="match status" value="1"/>
</dbReference>
<dbReference type="InterPro" id="IPR029044">
    <property type="entry name" value="Nucleotide-diphossugar_trans"/>
</dbReference>
<dbReference type="PANTHER" id="PTHR22913">
    <property type="entry name" value="HYALURONAN SYNTHASE"/>
    <property type="match status" value="1"/>
</dbReference>
<dbReference type="PANTHER" id="PTHR22913:SF6">
    <property type="entry name" value="HYALURONAN SYNTHASE 3"/>
    <property type="match status" value="1"/>
</dbReference>
<dbReference type="Pfam" id="PF13641">
    <property type="entry name" value="Glyco_tranf_2_3"/>
    <property type="match status" value="1"/>
</dbReference>
<dbReference type="SUPFAM" id="SSF53448">
    <property type="entry name" value="Nucleotide-diphospho-sugar transferases"/>
    <property type="match status" value="1"/>
</dbReference>
<gene>
    <name type="primary">HAS3</name>
</gene>
<comment type="function">
    <text evidence="2">Catalyzes the addition of GlcNAc or GlcUA monosaccharides to the nascent hyaluronan polymer. Therefore, it is essential to hyaluronan synthesis a major component of most extracellular matrices that has a structural role in tissues architectures and regulates cell adhesion, migration and differentiation (By similarity). This is one of three isoenzymes responsible for cellular hyaluronan synthesis.</text>
</comment>
<comment type="catalytic activity">
    <reaction evidence="2">
        <text>[hyaluronan](n) + UDP-N-acetyl-alpha-D-glucosamine = N-acetyl-beta-D-glucosaminyl-(1-&gt;4)-[hyaluronan](n) + UDP + H(+)</text>
        <dbReference type="Rhea" id="RHEA:20465"/>
        <dbReference type="Rhea" id="RHEA-COMP:12583"/>
        <dbReference type="Rhea" id="RHEA-COMP:12585"/>
        <dbReference type="ChEBI" id="CHEBI:15378"/>
        <dbReference type="ChEBI" id="CHEBI:57705"/>
        <dbReference type="ChEBI" id="CHEBI:58223"/>
        <dbReference type="ChEBI" id="CHEBI:132153"/>
        <dbReference type="ChEBI" id="CHEBI:132154"/>
        <dbReference type="EC" id="2.4.1.212"/>
    </reaction>
    <physiologicalReaction direction="left-to-right" evidence="2">
        <dbReference type="Rhea" id="RHEA:20466"/>
    </physiologicalReaction>
</comment>
<comment type="catalytic activity">
    <reaction evidence="2">
        <text>N-acetyl-beta-D-glucosaminyl-(1-&gt;4)-[hyaluronan](n) + UDP-alpha-D-glucuronate = [hyaluronan](n+1) + UDP + H(+)</text>
        <dbReference type="Rhea" id="RHEA:12528"/>
        <dbReference type="Rhea" id="RHEA-COMP:12585"/>
        <dbReference type="Rhea" id="RHEA-COMP:12587"/>
        <dbReference type="ChEBI" id="CHEBI:15378"/>
        <dbReference type="ChEBI" id="CHEBI:58052"/>
        <dbReference type="ChEBI" id="CHEBI:58223"/>
        <dbReference type="ChEBI" id="CHEBI:132153"/>
        <dbReference type="ChEBI" id="CHEBI:132154"/>
        <dbReference type="EC" id="2.4.1.212"/>
    </reaction>
    <physiologicalReaction direction="left-to-right" evidence="2">
        <dbReference type="Rhea" id="RHEA:12529"/>
    </physiologicalReaction>
</comment>
<comment type="cofactor">
    <cofactor>
        <name>Mg(2+)</name>
        <dbReference type="ChEBI" id="CHEBI:18420"/>
    </cofactor>
</comment>
<comment type="pathway">
    <text evidence="2">Glycan biosynthesis; hyaluronan biosynthesis.</text>
</comment>
<comment type="subcellular location">
    <subcellularLocation>
        <location evidence="2">Cell membrane</location>
        <topology evidence="3">Multi-pass membrane protein</topology>
    </subcellularLocation>
    <subcellularLocation>
        <location evidence="2">Golgi apparatus membrane</location>
    </subcellularLocation>
    <subcellularLocation>
        <location evidence="2">Golgi apparatus</location>
        <location evidence="2">trans-Golgi network membrane</location>
    </subcellularLocation>
    <subcellularLocation>
        <location evidence="2">Cytoplasmic vesicle</location>
    </subcellularLocation>
    <text evidence="1 2">Travels through endoplasmic reticulum (ER), Golgi, plasma membrane, and endocytic vesicles (By similarity). Actives only when present in plasma membrane (By similarity). O-GlcNAcylation controls its membrane localization. A rapid recycling of HAS3 between plasma membrane and endosomes is controlled by the cytosolic levels of UDP-GlcUA and UDP-GlcNAc (By similarity).</text>
</comment>
<comment type="PTM">
    <text evidence="1">O-GlcNAcylation increases the hyaluronan synthase activity, HAS3 stability and its plasma membrane residence. The concentration of UDP-GlcNAc controls the level of O-GlcNAc modification.</text>
</comment>
<comment type="similarity">
    <text evidence="4">Belongs to the NodC/HAS family.</text>
</comment>
<accession>O57425</accession>
<accession>F1NU27</accession>